<dbReference type="EMBL" id="CM000126">
    <property type="protein sequence ID" value="EAY74427.1"/>
    <property type="status" value="ALT_INIT"/>
    <property type="molecule type" value="Genomic_DNA"/>
</dbReference>
<dbReference type="SMR" id="A2WR31"/>
<dbReference type="HOGENOM" id="CLU_048643_1_1_1"/>
<dbReference type="Proteomes" id="UP000007015">
    <property type="component" value="Chromosome 1"/>
</dbReference>
<dbReference type="GO" id="GO:0005886">
    <property type="term" value="C:plasma membrane"/>
    <property type="evidence" value="ECO:0000250"/>
    <property type="project" value="UniProtKB"/>
</dbReference>
<dbReference type="GO" id="GO:0051119">
    <property type="term" value="F:sugar transmembrane transporter activity"/>
    <property type="evidence" value="ECO:0000250"/>
    <property type="project" value="UniProtKB"/>
</dbReference>
<dbReference type="FunFam" id="1.20.1280.290:FF:000001">
    <property type="entry name" value="Bidirectional sugar transporter SWEET"/>
    <property type="match status" value="1"/>
</dbReference>
<dbReference type="FunFam" id="1.20.1280.290:FF:000002">
    <property type="entry name" value="Bidirectional sugar transporter SWEET"/>
    <property type="match status" value="1"/>
</dbReference>
<dbReference type="Gene3D" id="1.20.1280.290">
    <property type="match status" value="2"/>
</dbReference>
<dbReference type="InterPro" id="IPR047664">
    <property type="entry name" value="SWEET"/>
</dbReference>
<dbReference type="InterPro" id="IPR004316">
    <property type="entry name" value="SWEET_rpt"/>
</dbReference>
<dbReference type="PANTHER" id="PTHR10791:SF57">
    <property type="entry name" value="BIDIRECTIONAL SUGAR TRANSPORTER SWEET2A"/>
    <property type="match status" value="1"/>
</dbReference>
<dbReference type="PANTHER" id="PTHR10791">
    <property type="entry name" value="RAG1-ACTIVATING PROTEIN 1"/>
    <property type="match status" value="1"/>
</dbReference>
<dbReference type="Pfam" id="PF03083">
    <property type="entry name" value="MtN3_slv"/>
    <property type="match status" value="2"/>
</dbReference>
<feature type="signal peptide" evidence="2">
    <location>
        <begin position="1"/>
        <end position="15"/>
    </location>
</feature>
<feature type="chain" id="PRO_0000404140" description="Bidirectional sugar transporter SWEET2a">
    <location>
        <begin position="16"/>
        <end position="243"/>
    </location>
</feature>
<feature type="topological domain" description="Extracellular" evidence="2">
    <location>
        <begin position="16"/>
        <end position="24"/>
    </location>
</feature>
<feature type="transmembrane region" description="Helical; Name=1" evidence="2">
    <location>
        <begin position="25"/>
        <end position="45"/>
    </location>
</feature>
<feature type="topological domain" description="Cytoplasmic" evidence="2">
    <location>
        <begin position="46"/>
        <end position="56"/>
    </location>
</feature>
<feature type="transmembrane region" description="Helical; Name=2" evidence="2">
    <location>
        <begin position="57"/>
        <end position="79"/>
    </location>
</feature>
<feature type="topological domain" description="Extracellular" evidence="2">
    <location>
        <begin position="80"/>
        <end position="90"/>
    </location>
</feature>
<feature type="transmembrane region" description="Helical; Name=3" evidence="2">
    <location>
        <begin position="91"/>
        <end position="111"/>
    </location>
</feature>
<feature type="topological domain" description="Cytoplasmic" evidence="2">
    <location>
        <begin position="112"/>
        <end position="118"/>
    </location>
</feature>
<feature type="transmembrane region" description="Helical; Name=4" evidence="2">
    <location>
        <begin position="119"/>
        <end position="139"/>
    </location>
</feature>
<feature type="topological domain" description="Extracellular" evidence="2">
    <location>
        <begin position="140"/>
        <end position="146"/>
    </location>
</feature>
<feature type="transmembrane region" description="Helical; Name=5" evidence="2">
    <location>
        <begin position="147"/>
        <end position="167"/>
    </location>
</feature>
<feature type="topological domain" description="Cytoplasmic" evidence="2">
    <location>
        <begin position="168"/>
        <end position="180"/>
    </location>
</feature>
<feature type="transmembrane region" description="Helical; Name=6" evidence="2">
    <location>
        <begin position="181"/>
        <end position="201"/>
    </location>
</feature>
<feature type="topological domain" description="Extracellular" evidence="2">
    <location>
        <begin position="202"/>
        <end position="203"/>
    </location>
</feature>
<feature type="transmembrane region" description="Helical; Name=7" evidence="2">
    <location>
        <begin position="204"/>
        <end position="224"/>
    </location>
</feature>
<feature type="topological domain" description="Cytoplasmic" evidence="2">
    <location>
        <begin position="225"/>
        <end position="243"/>
    </location>
</feature>
<feature type="domain" description="MtN3/slv 1">
    <location>
        <begin position="27"/>
        <end position="112"/>
    </location>
</feature>
<feature type="domain" description="MtN3/slv 2">
    <location>
        <begin position="147"/>
        <end position="229"/>
    </location>
</feature>
<comment type="function">
    <text evidence="1">Mediates both low-affinity uptake and efflux of sugar across the plasma membrane.</text>
</comment>
<comment type="subunit">
    <text evidence="1">Forms homooligomers and/or heterooligomers.</text>
</comment>
<comment type="subcellular location">
    <subcellularLocation>
        <location evidence="1">Cell membrane</location>
        <topology evidence="1">Multi-pass membrane protein</topology>
    </subcellularLocation>
</comment>
<comment type="similarity">
    <text evidence="3">Belongs to the SWEET sugar transporter family.</text>
</comment>
<comment type="sequence caution" evidence="3">
    <conflict type="erroneous initiation">
        <sequence resource="EMBL-CDS" id="EAY74427"/>
    </conflict>
    <text>Truncated N-terminus.</text>
</comment>
<organism>
    <name type="scientific">Oryza sativa subsp. indica</name>
    <name type="common">Rice</name>
    <dbReference type="NCBI Taxonomy" id="39946"/>
    <lineage>
        <taxon>Eukaryota</taxon>
        <taxon>Viridiplantae</taxon>
        <taxon>Streptophyta</taxon>
        <taxon>Embryophyta</taxon>
        <taxon>Tracheophyta</taxon>
        <taxon>Spermatophyta</taxon>
        <taxon>Magnoliopsida</taxon>
        <taxon>Liliopsida</taxon>
        <taxon>Poales</taxon>
        <taxon>Poaceae</taxon>
        <taxon>BOP clade</taxon>
        <taxon>Oryzoideae</taxon>
        <taxon>Oryzeae</taxon>
        <taxon>Oryzinae</taxon>
        <taxon>Oryza</taxon>
        <taxon>Oryza sativa</taxon>
    </lineage>
</organism>
<keyword id="KW-1003">Cell membrane</keyword>
<keyword id="KW-0472">Membrane</keyword>
<keyword id="KW-1185">Reference proteome</keyword>
<keyword id="KW-0677">Repeat</keyword>
<keyword id="KW-0732">Signal</keyword>
<keyword id="KW-0762">Sugar transport</keyword>
<keyword id="KW-0812">Transmembrane</keyword>
<keyword id="KW-1133">Transmembrane helix</keyword>
<keyword id="KW-0813">Transport</keyword>
<gene>
    <name type="primary">SWEET2A</name>
    <name type="ORF">OsI_02317</name>
</gene>
<protein>
    <recommendedName>
        <fullName>Bidirectional sugar transporter SWEET2a</fullName>
        <shortName>OsSWEET2a</shortName>
    </recommendedName>
</protein>
<accession>A2WR31</accession>
<reference key="1">
    <citation type="journal article" date="2005" name="PLoS Biol.">
        <title>The genomes of Oryza sativa: a history of duplications.</title>
        <authorList>
            <person name="Yu J."/>
            <person name="Wang J."/>
            <person name="Lin W."/>
            <person name="Li S."/>
            <person name="Li H."/>
            <person name="Zhou J."/>
            <person name="Ni P."/>
            <person name="Dong W."/>
            <person name="Hu S."/>
            <person name="Zeng C."/>
            <person name="Zhang J."/>
            <person name="Zhang Y."/>
            <person name="Li R."/>
            <person name="Xu Z."/>
            <person name="Li S."/>
            <person name="Li X."/>
            <person name="Zheng H."/>
            <person name="Cong L."/>
            <person name="Lin L."/>
            <person name="Yin J."/>
            <person name="Geng J."/>
            <person name="Li G."/>
            <person name="Shi J."/>
            <person name="Liu J."/>
            <person name="Lv H."/>
            <person name="Li J."/>
            <person name="Wang J."/>
            <person name="Deng Y."/>
            <person name="Ran L."/>
            <person name="Shi X."/>
            <person name="Wang X."/>
            <person name="Wu Q."/>
            <person name="Li C."/>
            <person name="Ren X."/>
            <person name="Wang J."/>
            <person name="Wang X."/>
            <person name="Li D."/>
            <person name="Liu D."/>
            <person name="Zhang X."/>
            <person name="Ji Z."/>
            <person name="Zhao W."/>
            <person name="Sun Y."/>
            <person name="Zhang Z."/>
            <person name="Bao J."/>
            <person name="Han Y."/>
            <person name="Dong L."/>
            <person name="Ji J."/>
            <person name="Chen P."/>
            <person name="Wu S."/>
            <person name="Liu J."/>
            <person name="Xiao Y."/>
            <person name="Bu D."/>
            <person name="Tan J."/>
            <person name="Yang L."/>
            <person name="Ye C."/>
            <person name="Zhang J."/>
            <person name="Xu J."/>
            <person name="Zhou Y."/>
            <person name="Yu Y."/>
            <person name="Zhang B."/>
            <person name="Zhuang S."/>
            <person name="Wei H."/>
            <person name="Liu B."/>
            <person name="Lei M."/>
            <person name="Yu H."/>
            <person name="Li Y."/>
            <person name="Xu H."/>
            <person name="Wei S."/>
            <person name="He X."/>
            <person name="Fang L."/>
            <person name="Zhang Z."/>
            <person name="Zhang Y."/>
            <person name="Huang X."/>
            <person name="Su Z."/>
            <person name="Tong W."/>
            <person name="Li J."/>
            <person name="Tong Z."/>
            <person name="Li S."/>
            <person name="Ye J."/>
            <person name="Wang L."/>
            <person name="Fang L."/>
            <person name="Lei T."/>
            <person name="Chen C.-S."/>
            <person name="Chen H.-C."/>
            <person name="Xu Z."/>
            <person name="Li H."/>
            <person name="Huang H."/>
            <person name="Zhang F."/>
            <person name="Xu H."/>
            <person name="Li N."/>
            <person name="Zhao C."/>
            <person name="Li S."/>
            <person name="Dong L."/>
            <person name="Huang Y."/>
            <person name="Li L."/>
            <person name="Xi Y."/>
            <person name="Qi Q."/>
            <person name="Li W."/>
            <person name="Zhang B."/>
            <person name="Hu W."/>
            <person name="Zhang Y."/>
            <person name="Tian X."/>
            <person name="Jiao Y."/>
            <person name="Liang X."/>
            <person name="Jin J."/>
            <person name="Gao L."/>
            <person name="Zheng W."/>
            <person name="Hao B."/>
            <person name="Liu S.-M."/>
            <person name="Wang W."/>
            <person name="Yuan L."/>
            <person name="Cao M."/>
            <person name="McDermott J."/>
            <person name="Samudrala R."/>
            <person name="Wang J."/>
            <person name="Wong G.K.-S."/>
            <person name="Yang H."/>
        </authorList>
    </citation>
    <scope>NUCLEOTIDE SEQUENCE [LARGE SCALE GENOMIC DNA]</scope>
    <source>
        <strain>cv. 93-11</strain>
    </source>
</reference>
<proteinExistence type="inferred from homology"/>
<evidence type="ECO:0000250" key="1">
    <source>
        <dbReference type="UniProtKB" id="Q8L9J7"/>
    </source>
</evidence>
<evidence type="ECO:0000255" key="2"/>
<evidence type="ECO:0000305" key="3"/>
<name>SWT2A_ORYSI</name>
<sequence>MMNALGLSVAATSTGSPFHDVCCYGAGIAGNIFALVLFISPLPTFKRIVRNGSTEQFSAMPYIYSLLNCLICLWYGLPFVSYGVVLVATVNSIGALFQLAYTATFIAFADAKNRVKVSSLLVMVFGVFALIVYVSLALFDHQTRQLFVGYLSVASLIFMFASPLSIINLVIRTKSVEYMPFYLSLSMFLMSVSFFAYGVLLHDFFIYIPNGIGTVLGVIQLVLYGYFRKGSREDSLPLLVTHT</sequence>